<reference key="1">
    <citation type="journal article" date="2003" name="Genome Res.">
        <title>Comparative genome analysis of Vibrio vulnificus, a marine pathogen.</title>
        <authorList>
            <person name="Chen C.-Y."/>
            <person name="Wu K.-M."/>
            <person name="Chang Y.-C."/>
            <person name="Chang C.-H."/>
            <person name="Tsai H.-C."/>
            <person name="Liao T.-L."/>
            <person name="Liu Y.-M."/>
            <person name="Chen H.-J."/>
            <person name="Shen A.B.-T."/>
            <person name="Li J.-C."/>
            <person name="Su T.-L."/>
            <person name="Shao C.-P."/>
            <person name="Lee C.-T."/>
            <person name="Hor L.-I."/>
            <person name="Tsai S.-F."/>
        </authorList>
    </citation>
    <scope>NUCLEOTIDE SEQUENCE [LARGE SCALE GENOMIC DNA]</scope>
    <source>
        <strain>YJ016</strain>
    </source>
</reference>
<sequence length="166" mass="19927">MEMSNAQRLILSNQYKLMSQLDPENAEKYQRFQTIVERGYELQMRELNKDYGCITEALCKEIIDVMEMYHAMQESFRMLDADESTQVDQRRLQFLGFDIASEAQLVHYVRFLTESEGLYPQFDKGDHHFNSQMPMLEKYRRMLATWRKCPRQYHLCATELRQIFNA</sequence>
<comment type="similarity">
    <text evidence="1">Belongs to the UPF0304 family.</text>
</comment>
<dbReference type="EMBL" id="BA000037">
    <property type="protein sequence ID" value="BAC95111.1"/>
    <property type="molecule type" value="Genomic_DNA"/>
</dbReference>
<dbReference type="RefSeq" id="WP_011079979.1">
    <property type="nucleotide sequence ID" value="NC_005139.1"/>
</dbReference>
<dbReference type="SMR" id="Q7MJ16"/>
<dbReference type="STRING" id="672.VV93_v1c20570"/>
<dbReference type="KEGG" id="vvy:VV2347"/>
<dbReference type="eggNOG" id="COG3013">
    <property type="taxonomic scope" value="Bacteria"/>
</dbReference>
<dbReference type="HOGENOM" id="CLU_101021_1_0_6"/>
<dbReference type="Proteomes" id="UP000002675">
    <property type="component" value="Chromosome I"/>
</dbReference>
<dbReference type="Gene3D" id="1.10.287.680">
    <property type="entry name" value="Helix hairpin bin"/>
    <property type="match status" value="1"/>
</dbReference>
<dbReference type="Gene3D" id="1.10.3190.10">
    <property type="entry name" value="yfbu gene product, domain 2"/>
    <property type="match status" value="1"/>
</dbReference>
<dbReference type="HAMAP" id="MF_00762">
    <property type="entry name" value="UPF0304"/>
    <property type="match status" value="1"/>
</dbReference>
<dbReference type="InterPro" id="IPR005587">
    <property type="entry name" value="UPF0304_YfbU"/>
</dbReference>
<dbReference type="InterPro" id="IPR023146">
    <property type="entry name" value="YfbU_alpha-helical_sf"/>
</dbReference>
<dbReference type="InterPro" id="IPR023145">
    <property type="entry name" value="YfbU_helix-hairpin_sf"/>
</dbReference>
<dbReference type="NCBIfam" id="NF003936">
    <property type="entry name" value="PRK05445.1"/>
    <property type="match status" value="1"/>
</dbReference>
<dbReference type="Pfam" id="PF03887">
    <property type="entry name" value="YfbU"/>
    <property type="match status" value="1"/>
</dbReference>
<dbReference type="PIRSF" id="PIRSF006272">
    <property type="entry name" value="UCP006272"/>
    <property type="match status" value="1"/>
</dbReference>
<dbReference type="SUPFAM" id="SSF116960">
    <property type="entry name" value="YfbU-like"/>
    <property type="match status" value="1"/>
</dbReference>
<gene>
    <name type="ordered locus">VV2347</name>
</gene>
<name>Y2347_VIBVY</name>
<proteinExistence type="inferred from homology"/>
<organism>
    <name type="scientific">Vibrio vulnificus (strain YJ016)</name>
    <dbReference type="NCBI Taxonomy" id="196600"/>
    <lineage>
        <taxon>Bacteria</taxon>
        <taxon>Pseudomonadati</taxon>
        <taxon>Pseudomonadota</taxon>
        <taxon>Gammaproteobacteria</taxon>
        <taxon>Vibrionales</taxon>
        <taxon>Vibrionaceae</taxon>
        <taxon>Vibrio</taxon>
    </lineage>
</organism>
<protein>
    <recommendedName>
        <fullName evidence="1">UPF0304 protein VV2347</fullName>
    </recommendedName>
</protein>
<evidence type="ECO:0000255" key="1">
    <source>
        <dbReference type="HAMAP-Rule" id="MF_00762"/>
    </source>
</evidence>
<accession>Q7MJ16</accession>
<feature type="chain" id="PRO_0000218173" description="UPF0304 protein VV2347">
    <location>
        <begin position="1"/>
        <end position="166"/>
    </location>
</feature>